<sequence length="635" mass="71756">MANDALSAIFSNPSRKGVQPSTSIVSYTNNEDDIIDVENGKFNKNKNINTNVYVDNSSIEESEVVPLPETKSIWSKIYYDFIVLDKTTLNVSLKESFLYNRDLKPVEEERRCWSWFNYLYFWLADCFNINTWQIAGTGLQLGLNWWQCWLTVWIGYTFAGIFVVLNSRFGSAYHLSFPITVRASFGIFFSMWPIINRVVMAIVWYAVQAWLGATPVALMLKSIFGKNLEDRIPNHFGSPNSTTFEFMCFFIFWVVSIPFVLVAPHKIRHLFTVKAALIPFAAFGFLIWALKKSHGKIELGTLNDYSPHGSEFSWIFVRSLMACVANFAALIINAPDFGRFAKNPQASLWPQLVAIPLFFAITCLIGIIVTAAGYHLYGVNYWSPLDVLGQFLETTYTRGTRAGVFLISFVFALAQLGTNISANSLACGADMTALFPRYINIRRGSLFCVAMALCICPWNLMASSSKFTSALGAYAIFLSSIAGVICADYFVVRRGYVKLTHLFLAQKGSFYMFGNKFGANWRAFVAYICGIAPNLPGFIGDVGAPKITVSEGAMRLYYLGYPVGFFISAVIYLILCYFFPVPGTPVTNFLTEKGWFQRWAYVEDFEQDWKNELRRDDLCDDTVSIYDGTEEKIVY</sequence>
<organism>
    <name type="scientific">Saccharomyces cerevisiae (strain ATCC 204508 / S288c)</name>
    <name type="common">Baker's yeast</name>
    <dbReference type="NCBI Taxonomy" id="559292"/>
    <lineage>
        <taxon>Eukaryota</taxon>
        <taxon>Fungi</taxon>
        <taxon>Dikarya</taxon>
        <taxon>Ascomycota</taxon>
        <taxon>Saccharomycotina</taxon>
        <taxon>Saccharomycetes</taxon>
        <taxon>Saccharomycetales</taxon>
        <taxon>Saccharomycetaceae</taxon>
        <taxon>Saccharomyces</taxon>
    </lineage>
</organism>
<reference key="1">
    <citation type="journal article" date="1992" name="Yeast">
        <title>The allantoin and uracil permease gene sequences of Saccharomyces cerevisiae are nearly identical.</title>
        <authorList>
            <person name="Yoo H.S."/>
            <person name="Cunningham T.S."/>
            <person name="Cooper T.G."/>
        </authorList>
    </citation>
    <scope>NUCLEOTIDE SEQUENCE [GENOMIC DNA]</scope>
</reference>
<reference key="2">
    <citation type="journal article" date="1997" name="Nature">
        <title>The nucleotide sequence of Saccharomyces cerevisiae chromosome IX.</title>
        <authorList>
            <person name="Churcher C.M."/>
            <person name="Bowman S."/>
            <person name="Badcock K."/>
            <person name="Bankier A.T."/>
            <person name="Brown D."/>
            <person name="Chillingworth T."/>
            <person name="Connor R."/>
            <person name="Devlin K."/>
            <person name="Gentles S."/>
            <person name="Hamlin N."/>
            <person name="Harris D.E."/>
            <person name="Horsnell T."/>
            <person name="Hunt S."/>
            <person name="Jagels K."/>
            <person name="Jones M."/>
            <person name="Lye G."/>
            <person name="Moule S."/>
            <person name="Odell C."/>
            <person name="Pearson D."/>
            <person name="Rajandream M.A."/>
            <person name="Rice P."/>
            <person name="Rowley N."/>
            <person name="Skelton J."/>
            <person name="Smith V."/>
            <person name="Walsh S.V."/>
            <person name="Whitehead S."/>
            <person name="Barrell B.G."/>
        </authorList>
    </citation>
    <scope>NUCLEOTIDE SEQUENCE [LARGE SCALE GENOMIC DNA]</scope>
    <source>
        <strain>ATCC 204508 / S288c</strain>
    </source>
</reference>
<reference key="3">
    <citation type="journal article" date="2014" name="G3 (Bethesda)">
        <title>The reference genome sequence of Saccharomyces cerevisiae: Then and now.</title>
        <authorList>
            <person name="Engel S.R."/>
            <person name="Dietrich F.S."/>
            <person name="Fisk D.G."/>
            <person name="Binkley G."/>
            <person name="Balakrishnan R."/>
            <person name="Costanzo M.C."/>
            <person name="Dwight S.S."/>
            <person name="Hitz B.C."/>
            <person name="Karra K."/>
            <person name="Nash R.S."/>
            <person name="Weng S."/>
            <person name="Wong E.D."/>
            <person name="Lloyd P."/>
            <person name="Skrzypek M.S."/>
            <person name="Miyasato S.R."/>
            <person name="Simison M."/>
            <person name="Cherry J.M."/>
        </authorList>
    </citation>
    <scope>GENOME REANNOTATION</scope>
    <source>
        <strain>ATCC 204508 / S288c</strain>
    </source>
</reference>
<reference key="4">
    <citation type="journal article" date="2006" name="Proc. Natl. Acad. Sci. U.S.A.">
        <title>A global topology map of the Saccharomyces cerevisiae membrane proteome.</title>
        <authorList>
            <person name="Kim H."/>
            <person name="Melen K."/>
            <person name="Oesterberg M."/>
            <person name="von Heijne G."/>
        </authorList>
    </citation>
    <scope>TOPOLOGY [LARGE SCALE ANALYSIS]</scope>
    <source>
        <strain>ATCC 208353 / W303-1A</strain>
    </source>
</reference>
<name>DAL4_YEAST</name>
<comment type="function">
    <text>Transport of allantoin.</text>
</comment>
<comment type="subcellular location">
    <subcellularLocation>
        <location>Membrane</location>
        <topology>Multi-pass membrane protein</topology>
    </subcellularLocation>
</comment>
<comment type="similarity">
    <text evidence="2">Belongs to the purine-cytosine permease (2.A.39) family.</text>
</comment>
<accession>Q04895</accession>
<accession>D6VVV9</accession>
<keyword id="KW-0472">Membrane</keyword>
<keyword id="KW-0659">Purine metabolism</keyword>
<keyword id="KW-1185">Reference proteome</keyword>
<keyword id="KW-0812">Transmembrane</keyword>
<keyword id="KW-1133">Transmembrane helix</keyword>
<keyword id="KW-0813">Transport</keyword>
<evidence type="ECO:0000255" key="1"/>
<evidence type="ECO:0000305" key="2"/>
<dbReference type="EMBL" id="Z15121">
    <property type="protein sequence ID" value="CAA78826.1"/>
    <property type="molecule type" value="Genomic_DNA"/>
</dbReference>
<dbReference type="EMBL" id="Z38061">
    <property type="protein sequence ID" value="CAA86188.1"/>
    <property type="molecule type" value="Genomic_DNA"/>
</dbReference>
<dbReference type="EMBL" id="BK006942">
    <property type="protein sequence ID" value="DAA08575.1"/>
    <property type="molecule type" value="Genomic_DNA"/>
</dbReference>
<dbReference type="PIR" id="S30018">
    <property type="entry name" value="S30018"/>
</dbReference>
<dbReference type="RefSeq" id="NP_012294.3">
    <property type="nucleotide sequence ID" value="NM_001179550.3"/>
</dbReference>
<dbReference type="SMR" id="Q04895"/>
<dbReference type="BioGRID" id="35019">
    <property type="interactions" value="30"/>
</dbReference>
<dbReference type="DIP" id="DIP-7194N"/>
<dbReference type="FunCoup" id="Q04895">
    <property type="interactions" value="738"/>
</dbReference>
<dbReference type="IntAct" id="Q04895">
    <property type="interactions" value="1"/>
</dbReference>
<dbReference type="STRING" id="4932.YIR028W"/>
<dbReference type="TCDB" id="2.A.39.3.1">
    <property type="family name" value="the nucleobase:cation symporter-1 (ncs1) family"/>
</dbReference>
<dbReference type="PaxDb" id="4932-YIR028W"/>
<dbReference type="PeptideAtlas" id="Q04895"/>
<dbReference type="EnsemblFungi" id="YIR028W_mRNA">
    <property type="protein sequence ID" value="YIR028W"/>
    <property type="gene ID" value="YIR028W"/>
</dbReference>
<dbReference type="GeneID" id="854846"/>
<dbReference type="KEGG" id="sce:YIR028W"/>
<dbReference type="AGR" id="SGD:S000001467"/>
<dbReference type="SGD" id="S000001467">
    <property type="gene designation" value="DAL4"/>
</dbReference>
<dbReference type="VEuPathDB" id="FungiDB:YIR028W"/>
<dbReference type="eggNOG" id="KOG2466">
    <property type="taxonomic scope" value="Eukaryota"/>
</dbReference>
<dbReference type="GeneTree" id="ENSGT00940000176299"/>
<dbReference type="HOGENOM" id="CLU_021555_2_2_1"/>
<dbReference type="InParanoid" id="Q04895"/>
<dbReference type="OMA" id="YEAFAGP"/>
<dbReference type="OrthoDB" id="2018619at2759"/>
<dbReference type="BioCyc" id="YEAST:G3O-31446-MONOMER"/>
<dbReference type="BioGRID-ORCS" id="854846">
    <property type="hits" value="0 hits in 10 CRISPR screens"/>
</dbReference>
<dbReference type="PRO" id="PR:Q04895"/>
<dbReference type="Proteomes" id="UP000002311">
    <property type="component" value="Chromosome IX"/>
</dbReference>
<dbReference type="RNAct" id="Q04895">
    <property type="molecule type" value="protein"/>
</dbReference>
<dbReference type="GO" id="GO:0000324">
    <property type="term" value="C:fungal-type vacuole"/>
    <property type="evidence" value="ECO:0007005"/>
    <property type="project" value="SGD"/>
</dbReference>
<dbReference type="GO" id="GO:0005886">
    <property type="term" value="C:plasma membrane"/>
    <property type="evidence" value="ECO:0000318"/>
    <property type="project" value="GO_Central"/>
</dbReference>
<dbReference type="GO" id="GO:0005274">
    <property type="term" value="F:allantoin:proton symporter activity"/>
    <property type="evidence" value="ECO:0000315"/>
    <property type="project" value="SGD"/>
</dbReference>
<dbReference type="GO" id="GO:0015205">
    <property type="term" value="F:nucleobase transmembrane transporter activity"/>
    <property type="evidence" value="ECO:0000318"/>
    <property type="project" value="GO_Central"/>
</dbReference>
<dbReference type="GO" id="GO:0000256">
    <property type="term" value="P:allantoin catabolic process"/>
    <property type="evidence" value="ECO:0000315"/>
    <property type="project" value="SGD"/>
</dbReference>
<dbReference type="GO" id="GO:0015720">
    <property type="term" value="P:allantoin transport"/>
    <property type="evidence" value="ECO:0000315"/>
    <property type="project" value="SGD"/>
</dbReference>
<dbReference type="GO" id="GO:0015851">
    <property type="term" value="P:nucleobase transport"/>
    <property type="evidence" value="ECO:0000318"/>
    <property type="project" value="GO_Central"/>
</dbReference>
<dbReference type="GO" id="GO:0006144">
    <property type="term" value="P:purine nucleobase metabolic process"/>
    <property type="evidence" value="ECO:0007669"/>
    <property type="project" value="UniProtKB-KW"/>
</dbReference>
<dbReference type="CDD" id="cd11482">
    <property type="entry name" value="SLC-NCS1sbd_NRT1-like"/>
    <property type="match status" value="1"/>
</dbReference>
<dbReference type="FunFam" id="1.10.4160.10:FF:000001">
    <property type="entry name" value="Uracil permease, putative"/>
    <property type="match status" value="1"/>
</dbReference>
<dbReference type="Gene3D" id="1.10.4160.10">
    <property type="entry name" value="Hydantoin permease"/>
    <property type="match status" value="1"/>
</dbReference>
<dbReference type="InterPro" id="IPR012681">
    <property type="entry name" value="NCS1"/>
</dbReference>
<dbReference type="InterPro" id="IPR001248">
    <property type="entry name" value="Pur-cyt_permease"/>
</dbReference>
<dbReference type="InterPro" id="IPR045225">
    <property type="entry name" value="Uracil/uridine/allantoin_perm"/>
</dbReference>
<dbReference type="NCBIfam" id="TIGR00800">
    <property type="entry name" value="ncs1"/>
    <property type="match status" value="1"/>
</dbReference>
<dbReference type="PANTHER" id="PTHR30618:SF2">
    <property type="entry name" value="ALLANTOIN PERMEASE-RELATED"/>
    <property type="match status" value="1"/>
</dbReference>
<dbReference type="PANTHER" id="PTHR30618">
    <property type="entry name" value="NCS1 FAMILY PURINE/PYRIMIDINE TRANSPORTER"/>
    <property type="match status" value="1"/>
</dbReference>
<dbReference type="Pfam" id="PF02133">
    <property type="entry name" value="Transp_cyt_pur"/>
    <property type="match status" value="1"/>
</dbReference>
<gene>
    <name type="primary">DAL4</name>
    <name type="ordered locus">YIR028W</name>
</gene>
<protein>
    <recommendedName>
        <fullName>Allantoin permease</fullName>
    </recommendedName>
    <alternativeName>
        <fullName>Allantoin transport protein</fullName>
    </alternativeName>
</protein>
<proteinExistence type="evidence at protein level"/>
<feature type="chain" id="PRO_0000197919" description="Allantoin permease">
    <location>
        <begin position="1"/>
        <end position="635"/>
    </location>
</feature>
<feature type="topological domain" description="Cytoplasmic" evidence="1">
    <location>
        <begin position="1"/>
        <end position="144"/>
    </location>
</feature>
<feature type="transmembrane region" description="Helical" evidence="1">
    <location>
        <begin position="145"/>
        <end position="165"/>
    </location>
</feature>
<feature type="topological domain" description="Extracellular" evidence="1">
    <location>
        <begin position="166"/>
        <end position="174"/>
    </location>
</feature>
<feature type="transmembrane region" description="Helical" evidence="1">
    <location>
        <begin position="175"/>
        <end position="195"/>
    </location>
</feature>
<feature type="topological domain" description="Cytoplasmic" evidence="1">
    <location>
        <begin position="196"/>
        <end position="198"/>
    </location>
</feature>
<feature type="transmembrane region" description="Helical" evidence="1">
    <location>
        <begin position="199"/>
        <end position="219"/>
    </location>
</feature>
<feature type="topological domain" description="Extracellular" evidence="1">
    <location>
        <begin position="220"/>
        <end position="243"/>
    </location>
</feature>
<feature type="transmembrane region" description="Helical" evidence="1">
    <location>
        <begin position="244"/>
        <end position="264"/>
    </location>
</feature>
<feature type="topological domain" description="Cytoplasmic" evidence="1">
    <location>
        <begin position="265"/>
        <end position="269"/>
    </location>
</feature>
<feature type="transmembrane region" description="Helical" evidence="1">
    <location>
        <begin position="270"/>
        <end position="290"/>
    </location>
</feature>
<feature type="topological domain" description="Extracellular" evidence="1">
    <location>
        <begin position="291"/>
        <end position="311"/>
    </location>
</feature>
<feature type="transmembrane region" description="Helical" evidence="1">
    <location>
        <begin position="312"/>
        <end position="332"/>
    </location>
</feature>
<feature type="topological domain" description="Cytoplasmic" evidence="1">
    <location>
        <begin position="333"/>
        <end position="351"/>
    </location>
</feature>
<feature type="transmembrane region" description="Helical" evidence="1">
    <location>
        <begin position="352"/>
        <end position="372"/>
    </location>
</feature>
<feature type="topological domain" description="Extracellular" evidence="1">
    <location>
        <begin position="373"/>
        <end position="401"/>
    </location>
</feature>
<feature type="transmembrane region" description="Helical" evidence="1">
    <location>
        <begin position="402"/>
        <end position="422"/>
    </location>
</feature>
<feature type="topological domain" description="Cytoplasmic" evidence="1">
    <location>
        <begin position="423"/>
        <end position="443"/>
    </location>
</feature>
<feature type="transmembrane region" description="Helical" evidence="1">
    <location>
        <begin position="444"/>
        <end position="464"/>
    </location>
</feature>
<feature type="topological domain" description="Extracellular" evidence="1">
    <location>
        <begin position="465"/>
        <end position="466"/>
    </location>
</feature>
<feature type="transmembrane region" description="Helical" evidence="1">
    <location>
        <begin position="467"/>
        <end position="487"/>
    </location>
</feature>
<feature type="topological domain" description="Cytoplasmic" evidence="1">
    <location>
        <begin position="488"/>
        <end position="522"/>
    </location>
</feature>
<feature type="transmembrane region" description="Helical" evidence="1">
    <location>
        <begin position="523"/>
        <end position="543"/>
    </location>
</feature>
<feature type="topological domain" description="Extracellular" evidence="1">
    <location>
        <begin position="544"/>
        <end position="560"/>
    </location>
</feature>
<feature type="transmembrane region" description="Helical" evidence="1">
    <location>
        <begin position="561"/>
        <end position="581"/>
    </location>
</feature>
<feature type="topological domain" description="Cytoplasmic" evidence="1">
    <location>
        <begin position="582"/>
        <end position="635"/>
    </location>
</feature>